<proteinExistence type="inferred from homology"/>
<keyword id="KW-1185">Reference proteome</keyword>
<feature type="chain" id="PRO_0000317345" description="UPF0512 protein G">
    <location>
        <begin position="1"/>
        <end position="83"/>
    </location>
</feature>
<gene>
    <name type="ORF">DDB_G0270376</name>
</gene>
<sequence length="83" mass="8480">MTLFNSISSISNSTGISKHSLIGNFESNNSRSGGNSISWLGGFDGCGGCGGCGGCGGCGCGSSNLNIINVDIDIGRRRRRRCC</sequence>
<evidence type="ECO:0000305" key="1"/>
<organism>
    <name type="scientific">Dictyostelium discoideum</name>
    <name type="common">Social amoeba</name>
    <dbReference type="NCBI Taxonomy" id="44689"/>
    <lineage>
        <taxon>Eukaryota</taxon>
        <taxon>Amoebozoa</taxon>
        <taxon>Evosea</taxon>
        <taxon>Eumycetozoa</taxon>
        <taxon>Dictyostelia</taxon>
        <taxon>Dictyosteliales</taxon>
        <taxon>Dictyosteliaceae</taxon>
        <taxon>Dictyostelium</taxon>
    </lineage>
</organism>
<protein>
    <recommendedName>
        <fullName>UPF0512 protein G</fullName>
    </recommendedName>
</protein>
<name>U512G_DICDI</name>
<reference key="1">
    <citation type="journal article" date="2005" name="Nature">
        <title>The genome of the social amoeba Dictyostelium discoideum.</title>
        <authorList>
            <person name="Eichinger L."/>
            <person name="Pachebat J.A."/>
            <person name="Gloeckner G."/>
            <person name="Rajandream M.A."/>
            <person name="Sucgang R."/>
            <person name="Berriman M."/>
            <person name="Song J."/>
            <person name="Olsen R."/>
            <person name="Szafranski K."/>
            <person name="Xu Q."/>
            <person name="Tunggal B."/>
            <person name="Kummerfeld S."/>
            <person name="Madera M."/>
            <person name="Konfortov B.A."/>
            <person name="Rivero F."/>
            <person name="Bankier A.T."/>
            <person name="Lehmann R."/>
            <person name="Hamlin N."/>
            <person name="Davies R."/>
            <person name="Gaudet P."/>
            <person name="Fey P."/>
            <person name="Pilcher K."/>
            <person name="Chen G."/>
            <person name="Saunders D."/>
            <person name="Sodergren E.J."/>
            <person name="Davis P."/>
            <person name="Kerhornou A."/>
            <person name="Nie X."/>
            <person name="Hall N."/>
            <person name="Anjard C."/>
            <person name="Hemphill L."/>
            <person name="Bason N."/>
            <person name="Farbrother P."/>
            <person name="Desany B."/>
            <person name="Just E."/>
            <person name="Morio T."/>
            <person name="Rost R."/>
            <person name="Churcher C.M."/>
            <person name="Cooper J."/>
            <person name="Haydock S."/>
            <person name="van Driessche N."/>
            <person name="Cronin A."/>
            <person name="Goodhead I."/>
            <person name="Muzny D.M."/>
            <person name="Mourier T."/>
            <person name="Pain A."/>
            <person name="Lu M."/>
            <person name="Harper D."/>
            <person name="Lindsay R."/>
            <person name="Hauser H."/>
            <person name="James K.D."/>
            <person name="Quiles M."/>
            <person name="Madan Babu M."/>
            <person name="Saito T."/>
            <person name="Buchrieser C."/>
            <person name="Wardroper A."/>
            <person name="Felder M."/>
            <person name="Thangavelu M."/>
            <person name="Johnson D."/>
            <person name="Knights A."/>
            <person name="Loulseged H."/>
            <person name="Mungall K.L."/>
            <person name="Oliver K."/>
            <person name="Price C."/>
            <person name="Quail M.A."/>
            <person name="Urushihara H."/>
            <person name="Hernandez J."/>
            <person name="Rabbinowitsch E."/>
            <person name="Steffen D."/>
            <person name="Sanders M."/>
            <person name="Ma J."/>
            <person name="Kohara Y."/>
            <person name="Sharp S."/>
            <person name="Simmonds M.N."/>
            <person name="Spiegler S."/>
            <person name="Tivey A."/>
            <person name="Sugano S."/>
            <person name="White B."/>
            <person name="Walker D."/>
            <person name="Woodward J.R."/>
            <person name="Winckler T."/>
            <person name="Tanaka Y."/>
            <person name="Shaulsky G."/>
            <person name="Schleicher M."/>
            <person name="Weinstock G.M."/>
            <person name="Rosenthal A."/>
            <person name="Cox E.C."/>
            <person name="Chisholm R.L."/>
            <person name="Gibbs R.A."/>
            <person name="Loomis W.F."/>
            <person name="Platzer M."/>
            <person name="Kay R.R."/>
            <person name="Williams J.G."/>
            <person name="Dear P.H."/>
            <person name="Noegel A.A."/>
            <person name="Barrell B.G."/>
            <person name="Kuspa A."/>
        </authorList>
    </citation>
    <scope>NUCLEOTIDE SEQUENCE [LARGE SCALE GENOMIC DNA]</scope>
    <source>
        <strain>AX4</strain>
    </source>
</reference>
<comment type="similarity">
    <text evidence="1">Belongs to the UPF0512 family.</text>
</comment>
<accession>Q55BT1</accession>
<dbReference type="EMBL" id="AAFI02000005">
    <property type="protein sequence ID" value="EAL72538.1"/>
    <property type="molecule type" value="Genomic_DNA"/>
</dbReference>
<dbReference type="RefSeq" id="XP_646750.1">
    <property type="nucleotide sequence ID" value="XM_641658.1"/>
</dbReference>
<dbReference type="FunCoup" id="Q55BT1">
    <property type="interactions" value="640"/>
</dbReference>
<dbReference type="PaxDb" id="44689-DDB0266554"/>
<dbReference type="EnsemblProtists" id="EAL72538">
    <property type="protein sequence ID" value="EAL72538"/>
    <property type="gene ID" value="DDB_G0270376"/>
</dbReference>
<dbReference type="GeneID" id="8617723"/>
<dbReference type="KEGG" id="ddi:DDB_G0270376"/>
<dbReference type="dictyBase" id="DDB_G0270376"/>
<dbReference type="HOGENOM" id="CLU_194865_0_0_1"/>
<dbReference type="InParanoid" id="Q55BT1"/>
<dbReference type="PRO" id="PR:Q55BT1"/>
<dbReference type="Proteomes" id="UP000002195">
    <property type="component" value="Chromosome 1"/>
</dbReference>